<evidence type="ECO:0000255" key="1">
    <source>
        <dbReference type="HAMAP-Rule" id="MF_00033"/>
    </source>
</evidence>
<evidence type="ECO:0000256" key="2">
    <source>
        <dbReference type="SAM" id="MobiDB-lite"/>
    </source>
</evidence>
<accession>B9MFR2</accession>
<comment type="function">
    <text evidence="1">Cell wall formation. Catalyzes the transfer of a GlcNAc subunit on undecaprenyl-pyrophosphoryl-MurNAc-pentapeptide (lipid intermediate I) to form undecaprenyl-pyrophosphoryl-MurNAc-(pentapeptide)GlcNAc (lipid intermediate II).</text>
</comment>
<comment type="catalytic activity">
    <reaction evidence="1">
        <text>di-trans,octa-cis-undecaprenyl diphospho-N-acetyl-alpha-D-muramoyl-L-alanyl-D-glutamyl-meso-2,6-diaminopimeloyl-D-alanyl-D-alanine + UDP-N-acetyl-alpha-D-glucosamine = di-trans,octa-cis-undecaprenyl diphospho-[N-acetyl-alpha-D-glucosaminyl-(1-&gt;4)]-N-acetyl-alpha-D-muramoyl-L-alanyl-D-glutamyl-meso-2,6-diaminopimeloyl-D-alanyl-D-alanine + UDP + H(+)</text>
        <dbReference type="Rhea" id="RHEA:31227"/>
        <dbReference type="ChEBI" id="CHEBI:15378"/>
        <dbReference type="ChEBI" id="CHEBI:57705"/>
        <dbReference type="ChEBI" id="CHEBI:58223"/>
        <dbReference type="ChEBI" id="CHEBI:61387"/>
        <dbReference type="ChEBI" id="CHEBI:61388"/>
        <dbReference type="EC" id="2.4.1.227"/>
    </reaction>
</comment>
<comment type="pathway">
    <text evidence="1">Cell wall biogenesis; peptidoglycan biosynthesis.</text>
</comment>
<comment type="subcellular location">
    <subcellularLocation>
        <location evidence="1">Cell inner membrane</location>
        <topology evidence="1">Peripheral membrane protein</topology>
        <orientation evidence="1">Cytoplasmic side</orientation>
    </subcellularLocation>
</comment>
<comment type="similarity">
    <text evidence="1">Belongs to the glycosyltransferase 28 family. MurG subfamily.</text>
</comment>
<proteinExistence type="inferred from homology"/>
<feature type="chain" id="PRO_1000192127" description="UDP-N-acetylglucosamine--N-acetylmuramyl-(pentapeptide) pyrophosphoryl-undecaprenol N-acetylglucosamine transferase">
    <location>
        <begin position="1"/>
        <end position="399"/>
    </location>
</feature>
<feature type="region of interest" description="Disordered" evidence="2">
    <location>
        <begin position="1"/>
        <end position="30"/>
    </location>
</feature>
<feature type="compositionally biased region" description="Basic residues" evidence="2">
    <location>
        <begin position="1"/>
        <end position="21"/>
    </location>
</feature>
<feature type="binding site" evidence="1">
    <location>
        <begin position="58"/>
        <end position="60"/>
    </location>
    <ligand>
        <name>UDP-N-acetyl-alpha-D-glucosamine</name>
        <dbReference type="ChEBI" id="CHEBI:57705"/>
    </ligand>
</feature>
<feature type="binding site" evidence="1">
    <location>
        <position position="170"/>
    </location>
    <ligand>
        <name>UDP-N-acetyl-alpha-D-glucosamine</name>
        <dbReference type="ChEBI" id="CHEBI:57705"/>
    </ligand>
</feature>
<feature type="binding site" evidence="1">
    <location>
        <position position="206"/>
    </location>
    <ligand>
        <name>UDP-N-acetyl-alpha-D-glucosamine</name>
        <dbReference type="ChEBI" id="CHEBI:57705"/>
    </ligand>
</feature>
<feature type="binding site" evidence="1">
    <location>
        <position position="234"/>
    </location>
    <ligand>
        <name>UDP-N-acetyl-alpha-D-glucosamine</name>
        <dbReference type="ChEBI" id="CHEBI:57705"/>
    </ligand>
</feature>
<feature type="binding site" evidence="1">
    <location>
        <position position="288"/>
    </location>
    <ligand>
        <name>UDP-N-acetyl-alpha-D-glucosamine</name>
        <dbReference type="ChEBI" id="CHEBI:57705"/>
    </ligand>
</feature>
<feature type="binding site" evidence="1">
    <location>
        <position position="333"/>
    </location>
    <ligand>
        <name>UDP-N-acetyl-alpha-D-glucosamine</name>
        <dbReference type="ChEBI" id="CHEBI:57705"/>
    </ligand>
</feature>
<dbReference type="EC" id="2.4.1.227" evidence="1"/>
<dbReference type="EMBL" id="CP001392">
    <property type="protein sequence ID" value="ACM34413.1"/>
    <property type="molecule type" value="Genomic_DNA"/>
</dbReference>
<dbReference type="SMR" id="B9MFR2"/>
<dbReference type="CAZy" id="GT28">
    <property type="family name" value="Glycosyltransferase Family 28"/>
</dbReference>
<dbReference type="KEGG" id="dia:Dtpsy_2980"/>
<dbReference type="eggNOG" id="COG0707">
    <property type="taxonomic scope" value="Bacteria"/>
</dbReference>
<dbReference type="HOGENOM" id="CLU_037404_2_0_4"/>
<dbReference type="UniPathway" id="UPA00219"/>
<dbReference type="Proteomes" id="UP000000450">
    <property type="component" value="Chromosome"/>
</dbReference>
<dbReference type="GO" id="GO:0005886">
    <property type="term" value="C:plasma membrane"/>
    <property type="evidence" value="ECO:0007669"/>
    <property type="project" value="UniProtKB-SubCell"/>
</dbReference>
<dbReference type="GO" id="GO:0051991">
    <property type="term" value="F:UDP-N-acetyl-D-glucosamine:N-acetylmuramoyl-L-alanyl-D-glutamyl-meso-2,6-diaminopimelyl-D-alanyl-D-alanine-diphosphoundecaprenol 4-beta-N-acetylglucosaminlytransferase activity"/>
    <property type="evidence" value="ECO:0007669"/>
    <property type="project" value="RHEA"/>
</dbReference>
<dbReference type="GO" id="GO:0050511">
    <property type="term" value="F:undecaprenyldiphospho-muramoylpentapeptide beta-N-acetylglucosaminyltransferase activity"/>
    <property type="evidence" value="ECO:0007669"/>
    <property type="project" value="UniProtKB-UniRule"/>
</dbReference>
<dbReference type="GO" id="GO:0005975">
    <property type="term" value="P:carbohydrate metabolic process"/>
    <property type="evidence" value="ECO:0007669"/>
    <property type="project" value="InterPro"/>
</dbReference>
<dbReference type="GO" id="GO:0051301">
    <property type="term" value="P:cell division"/>
    <property type="evidence" value="ECO:0007669"/>
    <property type="project" value="UniProtKB-KW"/>
</dbReference>
<dbReference type="GO" id="GO:0071555">
    <property type="term" value="P:cell wall organization"/>
    <property type="evidence" value="ECO:0007669"/>
    <property type="project" value="UniProtKB-KW"/>
</dbReference>
<dbReference type="GO" id="GO:0030259">
    <property type="term" value="P:lipid glycosylation"/>
    <property type="evidence" value="ECO:0007669"/>
    <property type="project" value="UniProtKB-UniRule"/>
</dbReference>
<dbReference type="GO" id="GO:0009252">
    <property type="term" value="P:peptidoglycan biosynthetic process"/>
    <property type="evidence" value="ECO:0007669"/>
    <property type="project" value="UniProtKB-UniRule"/>
</dbReference>
<dbReference type="GO" id="GO:0008360">
    <property type="term" value="P:regulation of cell shape"/>
    <property type="evidence" value="ECO:0007669"/>
    <property type="project" value="UniProtKB-KW"/>
</dbReference>
<dbReference type="CDD" id="cd03785">
    <property type="entry name" value="GT28_MurG"/>
    <property type="match status" value="1"/>
</dbReference>
<dbReference type="Gene3D" id="3.40.50.2000">
    <property type="entry name" value="Glycogen Phosphorylase B"/>
    <property type="match status" value="2"/>
</dbReference>
<dbReference type="HAMAP" id="MF_00033">
    <property type="entry name" value="MurG"/>
    <property type="match status" value="1"/>
</dbReference>
<dbReference type="InterPro" id="IPR006009">
    <property type="entry name" value="GlcNAc_MurG"/>
</dbReference>
<dbReference type="InterPro" id="IPR007235">
    <property type="entry name" value="Glyco_trans_28_C"/>
</dbReference>
<dbReference type="InterPro" id="IPR004276">
    <property type="entry name" value="GlycoTrans_28_N"/>
</dbReference>
<dbReference type="NCBIfam" id="TIGR01133">
    <property type="entry name" value="murG"/>
    <property type="match status" value="1"/>
</dbReference>
<dbReference type="PANTHER" id="PTHR21015:SF22">
    <property type="entry name" value="GLYCOSYLTRANSFERASE"/>
    <property type="match status" value="1"/>
</dbReference>
<dbReference type="PANTHER" id="PTHR21015">
    <property type="entry name" value="UDP-N-ACETYLGLUCOSAMINE--N-ACETYLMURAMYL-(PENTAPEPTIDE) PYROPHOSPHORYL-UNDECAPRENOL N-ACETYLGLUCOSAMINE TRANSFERASE 1"/>
    <property type="match status" value="1"/>
</dbReference>
<dbReference type="Pfam" id="PF04101">
    <property type="entry name" value="Glyco_tran_28_C"/>
    <property type="match status" value="1"/>
</dbReference>
<dbReference type="Pfam" id="PF03033">
    <property type="entry name" value="Glyco_transf_28"/>
    <property type="match status" value="1"/>
</dbReference>
<dbReference type="SUPFAM" id="SSF53756">
    <property type="entry name" value="UDP-Glycosyltransferase/glycogen phosphorylase"/>
    <property type="match status" value="1"/>
</dbReference>
<organism>
    <name type="scientific">Acidovorax ebreus (strain TPSY)</name>
    <name type="common">Diaphorobacter sp. (strain TPSY)</name>
    <dbReference type="NCBI Taxonomy" id="535289"/>
    <lineage>
        <taxon>Bacteria</taxon>
        <taxon>Pseudomonadati</taxon>
        <taxon>Pseudomonadota</taxon>
        <taxon>Betaproteobacteria</taxon>
        <taxon>Burkholderiales</taxon>
        <taxon>Comamonadaceae</taxon>
        <taxon>Diaphorobacter</taxon>
    </lineage>
</organism>
<sequence length="399" mass="43261">MTSRFGHSHHPRRGRSARARAGRREGVQSNFPATQVLERSAHSLPARERTALVMAGGTGGHIFPGLALAEALRERGWQVHWLGTPGSMEERLVPPRGFAFEPIDFSGVRGKGLKTLLALPLRLARACLQARAVVRRLQPDVVIGLGGYVTFPGGIAARLARKPLLLHEQNSVPGMANKLLSRLATRVYTAFPNVLPDAQWVGNPMRRAFTRQPRPERRLAGREGPLRLLVVGGSLGAKALNDIVPQALAWIHEQDRPIVTHQSGESQIEALRRSYAAAGVEATLTPFIEDTAAAFAEADLVLCRAGASTVTEIAAVGAAAVFVPFPHAVDDHQTTNAQYLVKVGGGWLVQQADLTAHGLAEMLQNMKRQDLLAKAQKARTMRKINATRDIVAACERLAR</sequence>
<gene>
    <name evidence="1" type="primary">murG</name>
    <name type="ordered locus">Dtpsy_2980</name>
</gene>
<reference key="1">
    <citation type="submission" date="2009-01" db="EMBL/GenBank/DDBJ databases">
        <title>Complete sequence of Diaphorobacter sp. TPSY.</title>
        <authorList>
            <consortium name="US DOE Joint Genome Institute"/>
            <person name="Lucas S."/>
            <person name="Copeland A."/>
            <person name="Lapidus A."/>
            <person name="Glavina del Rio T."/>
            <person name="Tice H."/>
            <person name="Bruce D."/>
            <person name="Goodwin L."/>
            <person name="Pitluck S."/>
            <person name="Chertkov O."/>
            <person name="Brettin T."/>
            <person name="Detter J.C."/>
            <person name="Han C."/>
            <person name="Larimer F."/>
            <person name="Land M."/>
            <person name="Hauser L."/>
            <person name="Kyrpides N."/>
            <person name="Mikhailova N."/>
            <person name="Coates J.D."/>
        </authorList>
    </citation>
    <scope>NUCLEOTIDE SEQUENCE [LARGE SCALE GENOMIC DNA]</scope>
    <source>
        <strain>TPSY</strain>
    </source>
</reference>
<keyword id="KW-0131">Cell cycle</keyword>
<keyword id="KW-0132">Cell division</keyword>
<keyword id="KW-0997">Cell inner membrane</keyword>
<keyword id="KW-1003">Cell membrane</keyword>
<keyword id="KW-0133">Cell shape</keyword>
<keyword id="KW-0961">Cell wall biogenesis/degradation</keyword>
<keyword id="KW-0328">Glycosyltransferase</keyword>
<keyword id="KW-0472">Membrane</keyword>
<keyword id="KW-0573">Peptidoglycan synthesis</keyword>
<keyword id="KW-1185">Reference proteome</keyword>
<keyword id="KW-0808">Transferase</keyword>
<protein>
    <recommendedName>
        <fullName evidence="1">UDP-N-acetylglucosamine--N-acetylmuramyl-(pentapeptide) pyrophosphoryl-undecaprenol N-acetylglucosamine transferase</fullName>
        <ecNumber evidence="1">2.4.1.227</ecNumber>
    </recommendedName>
    <alternativeName>
        <fullName evidence="1">Undecaprenyl-PP-MurNAc-pentapeptide-UDPGlcNAc GlcNAc transferase</fullName>
    </alternativeName>
</protein>
<name>MURG_ACIET</name>